<keyword id="KW-0238">DNA-binding</keyword>
<keyword id="KW-0479">Metal-binding</keyword>
<keyword id="KW-0539">Nucleus</keyword>
<keyword id="KW-1185">Reference proteome</keyword>
<keyword id="KW-0804">Transcription</keyword>
<keyword id="KW-0805">Transcription regulation</keyword>
<keyword id="KW-0862">Zinc</keyword>
<comment type="function">
    <text evidence="2 3">Transcriptional repressor of multidrug resistance genes, such as PDR5. Required for growth on non-fermentable carbon sources like lactate or glycerol.</text>
</comment>
<comment type="subcellular location">
    <subcellularLocation>
        <location evidence="4">Nucleus</location>
    </subcellularLocation>
</comment>
<accession>Q08904</accession>
<accession>D6W372</accession>
<gene>
    <name type="primary">RDR1</name>
    <name type="ordered locus">YOR380W</name>
</gene>
<name>RDR1_YEAST</name>
<protein>
    <recommendedName>
        <fullName>Protein RDR1</fullName>
    </recommendedName>
    <alternativeName>
        <fullName>Repressor of drug resistance protein 1</fullName>
    </alternativeName>
</protein>
<evidence type="ECO:0000255" key="1">
    <source>
        <dbReference type="PROSITE-ProRule" id="PRU00227"/>
    </source>
</evidence>
<evidence type="ECO:0000269" key="2">
    <source>
    </source>
</evidence>
<evidence type="ECO:0000269" key="3">
    <source>
    </source>
</evidence>
<evidence type="ECO:0000305" key="4"/>
<organism>
    <name type="scientific">Saccharomyces cerevisiae (strain ATCC 204508 / S288c)</name>
    <name type="common">Baker's yeast</name>
    <dbReference type="NCBI Taxonomy" id="559292"/>
    <lineage>
        <taxon>Eukaryota</taxon>
        <taxon>Fungi</taxon>
        <taxon>Dikarya</taxon>
        <taxon>Ascomycota</taxon>
        <taxon>Saccharomycotina</taxon>
        <taxon>Saccharomycetes</taxon>
        <taxon>Saccharomycetales</taxon>
        <taxon>Saccharomycetaceae</taxon>
        <taxon>Saccharomyces</taxon>
    </lineage>
</organism>
<feature type="chain" id="PRO_0000114972" description="Protein RDR1">
    <location>
        <begin position="1"/>
        <end position="546"/>
    </location>
</feature>
<feature type="DNA-binding region" description="Zn(2)-C6 fungal-type" evidence="1">
    <location>
        <begin position="20"/>
        <end position="46"/>
    </location>
</feature>
<dbReference type="EMBL" id="Z75288">
    <property type="protein sequence ID" value="CAA99712.1"/>
    <property type="molecule type" value="Genomic_DNA"/>
</dbReference>
<dbReference type="EMBL" id="BK006948">
    <property type="protein sequence ID" value="DAA11138.1"/>
    <property type="molecule type" value="Genomic_DNA"/>
</dbReference>
<dbReference type="PIR" id="S67292">
    <property type="entry name" value="S67292"/>
</dbReference>
<dbReference type="RefSeq" id="NP_015025.3">
    <property type="nucleotide sequence ID" value="NM_001183800.3"/>
</dbReference>
<dbReference type="SMR" id="Q08904"/>
<dbReference type="BioGRID" id="34761">
    <property type="interactions" value="111"/>
</dbReference>
<dbReference type="DIP" id="DIP-3904N"/>
<dbReference type="FunCoup" id="Q08904">
    <property type="interactions" value="293"/>
</dbReference>
<dbReference type="IntAct" id="Q08904">
    <property type="interactions" value="9"/>
</dbReference>
<dbReference type="MINT" id="Q08904"/>
<dbReference type="STRING" id="4932.YOR380W"/>
<dbReference type="iPTMnet" id="Q08904"/>
<dbReference type="PaxDb" id="4932-YOR380W"/>
<dbReference type="PeptideAtlas" id="Q08904"/>
<dbReference type="EnsemblFungi" id="YOR380W_mRNA">
    <property type="protein sequence ID" value="YOR380W"/>
    <property type="gene ID" value="YOR380W"/>
</dbReference>
<dbReference type="GeneID" id="854562"/>
<dbReference type="KEGG" id="sce:YOR380W"/>
<dbReference type="AGR" id="SGD:S000005907"/>
<dbReference type="SGD" id="S000005907">
    <property type="gene designation" value="RDR1"/>
</dbReference>
<dbReference type="VEuPathDB" id="FungiDB:YOR380W"/>
<dbReference type="eggNOG" id="ENOG502QWPB">
    <property type="taxonomic scope" value="Eukaryota"/>
</dbReference>
<dbReference type="HOGENOM" id="CLU_019691_0_0_1"/>
<dbReference type="InParanoid" id="Q08904"/>
<dbReference type="OMA" id="IAFCFYR"/>
<dbReference type="OrthoDB" id="2428527at2759"/>
<dbReference type="BioCyc" id="YEAST:G3O-33843-MONOMER"/>
<dbReference type="BioGRID-ORCS" id="854562">
    <property type="hits" value="1 hit in 13 CRISPR screens"/>
</dbReference>
<dbReference type="PRO" id="PR:Q08904"/>
<dbReference type="Proteomes" id="UP000002311">
    <property type="component" value="Chromosome XV"/>
</dbReference>
<dbReference type="RNAct" id="Q08904">
    <property type="molecule type" value="protein"/>
</dbReference>
<dbReference type="GO" id="GO:0005634">
    <property type="term" value="C:nucleus"/>
    <property type="evidence" value="ECO:0000305"/>
    <property type="project" value="SGD"/>
</dbReference>
<dbReference type="GO" id="GO:0003700">
    <property type="term" value="F:DNA-binding transcription factor activity"/>
    <property type="evidence" value="ECO:0000315"/>
    <property type="project" value="SGD"/>
</dbReference>
<dbReference type="GO" id="GO:0000981">
    <property type="term" value="F:DNA-binding transcription factor activity, RNA polymerase II-specific"/>
    <property type="evidence" value="ECO:0007669"/>
    <property type="project" value="InterPro"/>
</dbReference>
<dbReference type="GO" id="GO:0043565">
    <property type="term" value="F:sequence-specific DNA binding"/>
    <property type="evidence" value="ECO:0007005"/>
    <property type="project" value="SGD"/>
</dbReference>
<dbReference type="GO" id="GO:0008270">
    <property type="term" value="F:zinc ion binding"/>
    <property type="evidence" value="ECO:0007669"/>
    <property type="project" value="InterPro"/>
</dbReference>
<dbReference type="GO" id="GO:0006351">
    <property type="term" value="P:DNA-templated transcription"/>
    <property type="evidence" value="ECO:0007669"/>
    <property type="project" value="InterPro"/>
</dbReference>
<dbReference type="GO" id="GO:0009410">
    <property type="term" value="P:response to xenobiotic stimulus"/>
    <property type="evidence" value="ECO:0000315"/>
    <property type="project" value="SGD"/>
</dbReference>
<dbReference type="CDD" id="cd12148">
    <property type="entry name" value="fungal_TF_MHR"/>
    <property type="match status" value="1"/>
</dbReference>
<dbReference type="CDD" id="cd00067">
    <property type="entry name" value="GAL4"/>
    <property type="match status" value="1"/>
</dbReference>
<dbReference type="FunFam" id="4.10.240.10:FF:000016">
    <property type="entry name" value="C6 transcription factor, putative"/>
    <property type="match status" value="1"/>
</dbReference>
<dbReference type="Gene3D" id="4.10.240.10">
    <property type="entry name" value="Zn(2)-C6 fungal-type DNA-binding domain"/>
    <property type="match status" value="1"/>
</dbReference>
<dbReference type="InterPro" id="IPR052478">
    <property type="entry name" value="Metabolite_Synth_Reg"/>
</dbReference>
<dbReference type="InterPro" id="IPR007219">
    <property type="entry name" value="Transcription_factor_dom_fun"/>
</dbReference>
<dbReference type="InterPro" id="IPR036864">
    <property type="entry name" value="Zn2-C6_fun-type_DNA-bd_sf"/>
</dbReference>
<dbReference type="InterPro" id="IPR001138">
    <property type="entry name" value="Zn2Cys6_DnaBD"/>
</dbReference>
<dbReference type="PANTHER" id="PTHR31779">
    <property type="entry name" value="2-NITROPROPANE DIOXYGENASE FAMILY, PUTATIVE (AFU_ORTHOLOGUE AFUA_2G17430)-RELATED"/>
    <property type="match status" value="1"/>
</dbReference>
<dbReference type="PANTHER" id="PTHR31779:SF3">
    <property type="entry name" value="PROTEIN RDR1"/>
    <property type="match status" value="1"/>
</dbReference>
<dbReference type="Pfam" id="PF04082">
    <property type="entry name" value="Fungal_trans"/>
    <property type="match status" value="1"/>
</dbReference>
<dbReference type="Pfam" id="PF00172">
    <property type="entry name" value="Zn_clus"/>
    <property type="match status" value="1"/>
</dbReference>
<dbReference type="SMART" id="SM00906">
    <property type="entry name" value="Fungal_trans"/>
    <property type="match status" value="1"/>
</dbReference>
<dbReference type="SMART" id="SM00066">
    <property type="entry name" value="GAL4"/>
    <property type="match status" value="1"/>
</dbReference>
<dbReference type="SUPFAM" id="SSF57701">
    <property type="entry name" value="Zn2/Cys6 DNA-binding domain"/>
    <property type="match status" value="1"/>
</dbReference>
<dbReference type="PROSITE" id="PS00463">
    <property type="entry name" value="ZN2_CY6_FUNGAL_1"/>
    <property type="match status" value="1"/>
</dbReference>
<dbReference type="PROSITE" id="PS50048">
    <property type="entry name" value="ZN2_CY6_FUNGAL_2"/>
    <property type="match status" value="1"/>
</dbReference>
<sequence>MASPGSTALPHKRQRVRKACVPCRERKRKCNGKSPCEMCVAYGYVCHYIDGRVPSASPQVQQVGETSPDTESRPFVLPGIHRNEQPQPINTQNVTSQNIVDPTKSRYTIQHSAVAFPRCLGLELRSTNPPRLHSFAWHCGIRPEENPNSHVLLSDLVTKEEYYRISKVYFSVVHPIFDVVNPEQLAKNVEKYWDGDVKTLEYGAVIAGVIALGSFFMGSLGHPREMDIVQYAKGILDDPTFSRIPTVEQVSAWVLRTIYLRATSRPHVAWLASCVTIHLSEAIGLHHEIDREDIAISNNVPPKRTTVVSEHTRRLFWCAWSINTILSYDYGRSSVTLNRITCKPVKETDGNFTAHLVALAHLIPQDSVNANAAQLLQALAAVHESPNAHPFLSLTKGDICLSLYRRLRLLNHILDKNVVLQIIDIGNTALSAAYALVKLDQAWWNVLSTSFQYVCVLLAIDTPESLSHVATAMKTLDNITQILGTRIAFEAQKTAKLLLEDSMKKKRQEIQQLEQATHQRSNLETTHLLDIDWDALLDPSDTLNFM</sequence>
<reference key="1">
    <citation type="journal article" date="1997" name="Nature">
        <title>The nucleotide sequence of Saccharomyces cerevisiae chromosome XV.</title>
        <authorList>
            <person name="Dujon B."/>
            <person name="Albermann K."/>
            <person name="Aldea M."/>
            <person name="Alexandraki D."/>
            <person name="Ansorge W."/>
            <person name="Arino J."/>
            <person name="Benes V."/>
            <person name="Bohn C."/>
            <person name="Bolotin-Fukuhara M."/>
            <person name="Bordonne R."/>
            <person name="Boyer J."/>
            <person name="Camasses A."/>
            <person name="Casamayor A."/>
            <person name="Casas C."/>
            <person name="Cheret G."/>
            <person name="Cziepluch C."/>
            <person name="Daignan-Fornier B."/>
            <person name="Dang V.-D."/>
            <person name="de Haan M."/>
            <person name="Delius H."/>
            <person name="Durand P."/>
            <person name="Fairhead C."/>
            <person name="Feldmann H."/>
            <person name="Gaillon L."/>
            <person name="Galisson F."/>
            <person name="Gamo F.-J."/>
            <person name="Gancedo C."/>
            <person name="Goffeau A."/>
            <person name="Goulding S.E."/>
            <person name="Grivell L.A."/>
            <person name="Habbig B."/>
            <person name="Hand N.J."/>
            <person name="Hani J."/>
            <person name="Hattenhorst U."/>
            <person name="Hebling U."/>
            <person name="Hernando Y."/>
            <person name="Herrero E."/>
            <person name="Heumann K."/>
            <person name="Hiesel R."/>
            <person name="Hilger F."/>
            <person name="Hofmann B."/>
            <person name="Hollenberg C.P."/>
            <person name="Hughes B."/>
            <person name="Jauniaux J.-C."/>
            <person name="Kalogeropoulos A."/>
            <person name="Katsoulou C."/>
            <person name="Kordes E."/>
            <person name="Lafuente M.J."/>
            <person name="Landt O."/>
            <person name="Louis E.J."/>
            <person name="Maarse A.C."/>
            <person name="Madania A."/>
            <person name="Mannhaupt G."/>
            <person name="Marck C."/>
            <person name="Martin R.P."/>
            <person name="Mewes H.-W."/>
            <person name="Michaux G."/>
            <person name="Paces V."/>
            <person name="Parle-McDermott A.G."/>
            <person name="Pearson B.M."/>
            <person name="Perrin A."/>
            <person name="Pettersson B."/>
            <person name="Poch O."/>
            <person name="Pohl T.M."/>
            <person name="Poirey R."/>
            <person name="Portetelle D."/>
            <person name="Pujol A."/>
            <person name="Purnelle B."/>
            <person name="Ramezani Rad M."/>
            <person name="Rechmann S."/>
            <person name="Schwager C."/>
            <person name="Schweizer M."/>
            <person name="Sor F."/>
            <person name="Sterky F."/>
            <person name="Tarassov I.A."/>
            <person name="Teodoru C."/>
            <person name="Tettelin H."/>
            <person name="Thierry A."/>
            <person name="Tobiasch E."/>
            <person name="Tzermia M."/>
            <person name="Uhlen M."/>
            <person name="Unseld M."/>
            <person name="Valens M."/>
            <person name="Vandenbol M."/>
            <person name="Vetter I."/>
            <person name="Vlcek C."/>
            <person name="Voet M."/>
            <person name="Volckaert G."/>
            <person name="Voss H."/>
            <person name="Wambutt R."/>
            <person name="Wedler H."/>
            <person name="Wiemann S."/>
            <person name="Winsor B."/>
            <person name="Wolfe K.H."/>
            <person name="Zollner A."/>
            <person name="Zumstein E."/>
            <person name="Kleine K."/>
        </authorList>
    </citation>
    <scope>NUCLEOTIDE SEQUENCE [LARGE SCALE GENOMIC DNA]</scope>
    <source>
        <strain>ATCC 204508 / S288c</strain>
    </source>
</reference>
<reference key="2">
    <citation type="journal article" date="2014" name="G3 (Bethesda)">
        <title>The reference genome sequence of Saccharomyces cerevisiae: Then and now.</title>
        <authorList>
            <person name="Engel S.R."/>
            <person name="Dietrich F.S."/>
            <person name="Fisk D.G."/>
            <person name="Binkley G."/>
            <person name="Balakrishnan R."/>
            <person name="Costanzo M.C."/>
            <person name="Dwight S.S."/>
            <person name="Hitz B.C."/>
            <person name="Karra K."/>
            <person name="Nash R.S."/>
            <person name="Weng S."/>
            <person name="Wong E.D."/>
            <person name="Lloyd P."/>
            <person name="Skrzypek M.S."/>
            <person name="Miyasato S.R."/>
            <person name="Simison M."/>
            <person name="Cherry J.M."/>
        </authorList>
    </citation>
    <scope>GENOME REANNOTATION</scope>
    <source>
        <strain>ATCC 204508 / S288c</strain>
    </source>
</reference>
<reference key="3">
    <citation type="journal article" date="2001" name="Nucleic Acids Res.">
        <title>Phenotypic analysis of genes encoding yeast zinc cluster proteins.</title>
        <authorList>
            <person name="Akache B."/>
            <person name="Wu K."/>
            <person name="Turcotte B."/>
        </authorList>
    </citation>
    <scope>FUNCTION</scope>
</reference>
<reference key="4">
    <citation type="journal article" date="2002" name="J. Biol. Chem.">
        <title>Zinc cluster protein Rdr1p is a transcriptional repressor of the PDR5 gene encoding a multidrug transporter.</title>
        <authorList>
            <person name="Hellauer K."/>
            <person name="Akache B."/>
            <person name="MacPherson S."/>
            <person name="Sirard E."/>
            <person name="Turcotte B."/>
        </authorList>
    </citation>
    <scope>FUNCTION</scope>
</reference>
<proteinExistence type="predicted"/>